<comment type="function">
    <text evidence="1">Capsid protein (CA) is the structural component of the virus-like particle (VLP), forming the shell that encapsulates the retrotransposons dimeric RNA genome. The particles are assembled from trimer-clustered units and there are holes in the capsid shells that allow for the diffusion of macromolecules. CA also has nucleocapsid-like chaperone activity, promoting primer tRNA(i)-Met annealing to the multipartite primer-binding site (PBS), dimerization of Ty2 RNA and initiation of reverse transcription (By similarity).</text>
</comment>
<comment type="subunit">
    <text evidence="1">Homotrimer.</text>
</comment>
<comment type="subcellular location">
    <subcellularLocation>
        <location evidence="1">Cytoplasm</location>
    </subcellularLocation>
</comment>
<comment type="alternative products">
    <event type="ribosomal frameshifting"/>
    <isoform>
        <id>P25383-1</id>
        <name>Transposon Ty2-C Gag polyprotein</name>
        <sequence type="displayed"/>
    </isoform>
    <isoform>
        <id>P25384-1</id>
        <name>Transposon Ty2-C Gag-Pol polyprotein</name>
        <sequence type="external"/>
    </isoform>
    <text>The Gag-Pol polyprotein is generated by a +1 ribosomal frameshift.</text>
</comment>
<comment type="domain">
    <text evidence="1">The C-terminal RNA-binding region of CA is sufficient for all its nucleocapsid-like chaperone activities.</text>
</comment>
<comment type="miscellaneous">
    <text>Retrotransposons are mobile genetic entities that are able to replicate via an RNA intermediate and a reverse transcription step. In contrast to retroviruses, retrotransposons are non-infectious, lack an envelope and remain intracellular. Ty2 retrotransposons belong to the copia elements (pseudoviridae).</text>
</comment>
<comment type="miscellaneous">
    <molecule>Isoform Transposon Ty2-C Gag polyprotein</molecule>
    <text>Produced by conventional translation.</text>
</comment>
<dbReference type="EMBL" id="X03840">
    <property type="protein sequence ID" value="CAA27457.1"/>
    <property type="molecule type" value="Genomic_DNA"/>
</dbReference>
<dbReference type="EMBL" id="X59720">
    <property type="protein sequence ID" value="CAA42364.2"/>
    <property type="molecule type" value="Genomic_DNA"/>
</dbReference>
<dbReference type="EMBL" id="X02546">
    <property type="protein sequence ID" value="CAA26398.1"/>
    <property type="molecule type" value="Genomic_DNA"/>
</dbReference>
<dbReference type="EMBL" id="X00394">
    <property type="protein sequence ID" value="CAA25113.1"/>
    <property type="molecule type" value="Genomic_DNA"/>
</dbReference>
<dbReference type="EMBL" id="BK006937">
    <property type="protein sequence ID" value="DAA07464.1"/>
    <property type="molecule type" value="Genomic_DNA"/>
</dbReference>
<dbReference type="PIR" id="S19347">
    <property type="entry name" value="S19347"/>
</dbReference>
<dbReference type="RefSeq" id="NP_009910.2">
    <molecule id="P25383-1"/>
    <property type="nucleotide sequence ID" value="NM_001178667.1"/>
</dbReference>
<dbReference type="SMR" id="P25383"/>
<dbReference type="BioGRID" id="30963">
    <property type="interactions" value="9"/>
</dbReference>
<dbReference type="DIP" id="DIP-7334N"/>
<dbReference type="FunCoup" id="P25383">
    <property type="interactions" value="55"/>
</dbReference>
<dbReference type="IntAct" id="P25383">
    <property type="interactions" value="2"/>
</dbReference>
<dbReference type="MINT" id="P25383"/>
<dbReference type="PaxDb" id="4932-YCL020W"/>
<dbReference type="PeptideAtlas" id="P25383"/>
<dbReference type="GeneID" id="850339"/>
<dbReference type="KEGG" id="sce:YCL020W"/>
<dbReference type="AGR" id="SGD:S000000525"/>
<dbReference type="SGD" id="S000000525">
    <property type="gene designation" value="YCL020W"/>
</dbReference>
<dbReference type="VEuPathDB" id="FungiDB:YCL020W"/>
<dbReference type="eggNOG" id="KOG0017">
    <property type="taxonomic scope" value="Eukaryota"/>
</dbReference>
<dbReference type="HOGENOM" id="CLU_045291_1_0_1"/>
<dbReference type="InParanoid" id="P25383"/>
<dbReference type="OrthoDB" id="4046078at2759"/>
<dbReference type="Proteomes" id="UP000002311">
    <property type="component" value="Chromosome III"/>
</dbReference>
<dbReference type="RNAct" id="P25383">
    <property type="molecule type" value="protein"/>
</dbReference>
<dbReference type="GO" id="GO:0005737">
    <property type="term" value="C:cytoplasm"/>
    <property type="evidence" value="ECO:0007669"/>
    <property type="project" value="UniProtKB-SubCell"/>
</dbReference>
<dbReference type="GO" id="GO:0003723">
    <property type="term" value="F:RNA binding"/>
    <property type="evidence" value="ECO:0007669"/>
    <property type="project" value="InterPro"/>
</dbReference>
<dbReference type="GO" id="GO:0075523">
    <property type="term" value="P:viral translational frameshifting"/>
    <property type="evidence" value="ECO:0007669"/>
    <property type="project" value="UniProtKB-KW"/>
</dbReference>
<dbReference type="InterPro" id="IPR015820">
    <property type="entry name" value="TYA"/>
</dbReference>
<dbReference type="Pfam" id="PF01021">
    <property type="entry name" value="TYA"/>
    <property type="match status" value="1"/>
</dbReference>
<feature type="chain" id="PRO_0000203495" description="Transposon Ty2-C Gag polyprotein">
    <location>
        <begin position="1"/>
        <end position="438"/>
    </location>
</feature>
<feature type="chain" id="PRO_0000279282" description="Capsid protein" evidence="1">
    <location>
        <begin position="1"/>
        <end position="397"/>
    </location>
</feature>
<feature type="peptide" id="PRO_0000279283" description="Gag-p4" evidence="1">
    <location>
        <begin position="398"/>
        <end position="438"/>
    </location>
</feature>
<feature type="region of interest" description="Disordered" evidence="2">
    <location>
        <begin position="1"/>
        <end position="88"/>
    </location>
</feature>
<feature type="region of interest" description="RNA-binding" evidence="1">
    <location>
        <begin position="295"/>
        <end position="397"/>
    </location>
</feature>
<feature type="region of interest" description="Disordered" evidence="2">
    <location>
        <begin position="365"/>
        <end position="397"/>
    </location>
</feature>
<feature type="region of interest" description="Disordered" evidence="2">
    <location>
        <begin position="419"/>
        <end position="438"/>
    </location>
</feature>
<feature type="compositionally biased region" description="Polar residues" evidence="2">
    <location>
        <begin position="1"/>
        <end position="11"/>
    </location>
</feature>
<feature type="compositionally biased region" description="Polar residues" evidence="2">
    <location>
        <begin position="19"/>
        <end position="39"/>
    </location>
</feature>
<feature type="compositionally biased region" description="Polar residues" evidence="2">
    <location>
        <begin position="49"/>
        <end position="60"/>
    </location>
</feature>
<feature type="compositionally biased region" description="Low complexity" evidence="2">
    <location>
        <begin position="369"/>
        <end position="382"/>
    </location>
</feature>
<feature type="site" description="Cleavage; by Ty2 protease" evidence="1">
    <location>
        <begin position="397"/>
        <end position="398"/>
    </location>
</feature>
<feature type="sequence conflict" description="In Ref. 1 and 2; CAA27457." evidence="3" ref="1 2">
    <original>E</original>
    <variation>D</variation>
    <location>
        <position position="174"/>
    </location>
</feature>
<sequence length="438" mass="49841">MESQQLHQNPRSLHGSAYASVTSKEVPSNQDPLAVSASNLPEFDRDSTKVNSQQETTPGTSAVPENHHHVSPQPASVPPPQNGQYQQHGMMTPNKAMASNWAHYQQPSMMTCSHYQTSPAYYQPDPHYPLPQYIPPLSTSSPDPIDSQNQHSEVPQAETKVRNNVLPPHTLTSEENFSTWVKFYIRFLKNSNLGDIIPNDQGEIKRQMTYEEHAYIYNTFQAFAPFHLLPTWVKQILEINYADILTVLCKSVSKMQTNNQELKDWIALANLEYDGSTSADTFEITVSTIIQRLKENNINVSDRLACQLILKGLSGDFKYLRNQYRTKTNMKLSQLFAEIQLIYDENKIMNLNKPSQYKQHSEYKNVSRTSPNTTNTKVTTRNYQRTNSSKPRAAKAHNIATSSKFSRVNNDHINESTVSSQYLSDDNELSLRPATERI</sequence>
<protein>
    <recommendedName>
        <fullName>Transposon Ty2-C Gag polyprotein</fullName>
    </recommendedName>
    <alternativeName>
        <fullName>Transposon Ty2 protein A</fullName>
        <shortName>TY2A</shortName>
        <shortName>TYA</shortName>
    </alternativeName>
    <alternativeName>
        <fullName>Ty1-17 protein A</fullName>
    </alternativeName>
    <component>
        <recommendedName>
            <fullName>Capsid protein</fullName>
            <shortName>CA</shortName>
        </recommendedName>
    </component>
    <component>
        <recommendedName>
            <fullName>Gag-p4</fullName>
        </recommendedName>
    </component>
</protein>
<name>YC21A_YEAST</name>
<evidence type="ECO:0000250" key="1"/>
<evidence type="ECO:0000256" key="2">
    <source>
        <dbReference type="SAM" id="MobiDB-lite"/>
    </source>
</evidence>
<evidence type="ECO:0000305" key="3"/>
<accession>P25383</accession>
<accession>D6VQZ5</accession>
<accession>Q07125</accession>
<organism>
    <name type="scientific">Saccharomyces cerevisiae (strain ATCC 204508 / S288c)</name>
    <name type="common">Baker's yeast</name>
    <dbReference type="NCBI Taxonomy" id="559292"/>
    <lineage>
        <taxon>Eukaryota</taxon>
        <taxon>Fungi</taxon>
        <taxon>Dikarya</taxon>
        <taxon>Ascomycota</taxon>
        <taxon>Saccharomycotina</taxon>
        <taxon>Saccharomycetes</taxon>
        <taxon>Saccharomycetales</taxon>
        <taxon>Saccharomycetaceae</taxon>
        <taxon>Saccharomyces</taxon>
    </lineage>
</organism>
<proteinExistence type="inferred from homology"/>
<gene>
    <name type="primary">TY2A-C</name>
    <name type="synonym">YCLWTy2-1 GAG</name>
    <name type="ordered locus">YCL020W</name>
    <name type="ORF">YCL20W</name>
</gene>
<reference key="1">
    <citation type="journal article" date="1986" name="Nucleic Acids Res.">
        <title>A 'hot-spot' for Ty transposition on the left arm of yeast chromosome III.</title>
        <authorList>
            <person name="Warmington J.R."/>
            <person name="Anwar R."/>
            <person name="Newlon C.S."/>
            <person name="Waring R.B."/>
            <person name="Davies R.W."/>
            <person name="Indge K.J."/>
            <person name="Oliver S.G."/>
        </authorList>
    </citation>
    <scope>NUCLEOTIDE SEQUENCE [GENOMIC DNA]</scope>
</reference>
<reference key="2">
    <citation type="journal article" date="1985" name="Nucleic Acids Res.">
        <title>Nucleotide sequence characterization of Ty 1-17, a class II transposon from yeast.</title>
        <authorList>
            <person name="Warmington J.R."/>
            <person name="Waring R.B."/>
            <person name="Newlon C.S."/>
            <person name="Indge K.J."/>
            <person name="Oliver S.G."/>
        </authorList>
    </citation>
    <scope>NUCLEOTIDE SEQUENCE [GENOMIC DNA]</scope>
</reference>
<reference key="3">
    <citation type="journal article" date="1985" name="Nucleic Acids Res.">
        <title>Variants within the yeast Ty sequence family encode a class of structurally conserved proteins.</title>
        <authorList>
            <person name="Fulton A.M."/>
            <person name="Mellor J."/>
            <person name="Dobson M.J."/>
            <person name="Chester J."/>
            <person name="Warmington J.R."/>
            <person name="Indge K.J."/>
            <person name="Oliver S.G."/>
            <person name="de la Paz P."/>
            <person name="Wilson W."/>
            <person name="Kingsman A.J."/>
            <person name="Kingsman S.M."/>
        </authorList>
    </citation>
    <scope>NUCLEOTIDE SEQUENCE [GENOMIC DNA]</scope>
    <source>
        <strain>MD 40-4C</strain>
    </source>
</reference>
<reference key="4">
    <citation type="journal article" date="1992" name="Nature">
        <title>The complete DNA sequence of yeast chromosome III.</title>
        <authorList>
            <person name="Oliver S.G."/>
            <person name="van der Aart Q.J.M."/>
            <person name="Agostoni-Carbone M.L."/>
            <person name="Aigle M."/>
            <person name="Alberghina L."/>
            <person name="Alexandraki D."/>
            <person name="Antoine G."/>
            <person name="Anwar R."/>
            <person name="Ballesta J.P.G."/>
            <person name="Benit P."/>
            <person name="Berben G."/>
            <person name="Bergantino E."/>
            <person name="Biteau N."/>
            <person name="Bolle P.-A."/>
            <person name="Bolotin-Fukuhara M."/>
            <person name="Brown A."/>
            <person name="Brown A.J.P."/>
            <person name="Buhler J.-M."/>
            <person name="Carcano C."/>
            <person name="Carignani G."/>
            <person name="Cederberg H."/>
            <person name="Chanet R."/>
            <person name="Contreras R."/>
            <person name="Crouzet M."/>
            <person name="Daignan-Fornier B."/>
            <person name="Defoor E."/>
            <person name="Delgado M.D."/>
            <person name="Demolder J."/>
            <person name="Doira C."/>
            <person name="Dubois E."/>
            <person name="Dujon B."/>
            <person name="Duesterhoeft A."/>
            <person name="Erdmann D."/>
            <person name="Esteban M."/>
            <person name="Fabre F."/>
            <person name="Fairhead C."/>
            <person name="Faye G."/>
            <person name="Feldmann H."/>
            <person name="Fiers W."/>
            <person name="Francingues-Gaillard M.-C."/>
            <person name="Franco L."/>
            <person name="Frontali L."/>
            <person name="Fukuhara H."/>
            <person name="Fuller L.J."/>
            <person name="Galland P."/>
            <person name="Gent M.E."/>
            <person name="Gigot D."/>
            <person name="Gilliquet V."/>
            <person name="Glansdorff N."/>
            <person name="Goffeau A."/>
            <person name="Grenson M."/>
            <person name="Grisanti P."/>
            <person name="Grivell L.A."/>
            <person name="de Haan M."/>
            <person name="Haasemann M."/>
            <person name="Hatat D."/>
            <person name="Hoenicka J."/>
            <person name="Hegemann J.H."/>
            <person name="Herbert C.J."/>
            <person name="Hilger F."/>
            <person name="Hohmann S."/>
            <person name="Hollenberg C.P."/>
            <person name="Huse K."/>
            <person name="Iborra F."/>
            <person name="Indge K.J."/>
            <person name="Isono K."/>
            <person name="Jacq C."/>
            <person name="Jacquet M."/>
            <person name="James C.M."/>
            <person name="Jauniaux J.-C."/>
            <person name="Jia Y."/>
            <person name="Jimenez A."/>
            <person name="Kelly A."/>
            <person name="Kleinhans U."/>
            <person name="Kreisl P."/>
            <person name="Lanfranchi G."/>
            <person name="Lewis C."/>
            <person name="van der Linden C.G."/>
            <person name="Lucchini G."/>
            <person name="Lutzenkirchen K."/>
            <person name="Maat M.J."/>
            <person name="Mallet L."/>
            <person name="Mannhaupt G."/>
            <person name="Martegani E."/>
            <person name="Mathieu A."/>
            <person name="Maurer C.T.C."/>
            <person name="McConnell D."/>
            <person name="McKee R.A."/>
            <person name="Messenguy F."/>
            <person name="Mewes H.-W."/>
            <person name="Molemans F."/>
            <person name="Montague M.A."/>
            <person name="Muzi Falconi M."/>
            <person name="Navas L."/>
            <person name="Newlon C.S."/>
            <person name="Noone D."/>
            <person name="Pallier C."/>
            <person name="Panzeri L."/>
            <person name="Pearson B.M."/>
            <person name="Perea J."/>
            <person name="Philippsen P."/>
            <person name="Pierard A."/>
            <person name="Planta R.J."/>
            <person name="Plevani P."/>
            <person name="Poetsch B."/>
            <person name="Pohl F.M."/>
            <person name="Purnelle B."/>
            <person name="Ramezani Rad M."/>
            <person name="Rasmussen S.W."/>
            <person name="Raynal A."/>
            <person name="Remacha M.A."/>
            <person name="Richterich P."/>
            <person name="Roberts A.B."/>
            <person name="Rodriguez F."/>
            <person name="Sanz E."/>
            <person name="Schaaff-Gerstenschlaeger I."/>
            <person name="Scherens B."/>
            <person name="Schweitzer B."/>
            <person name="Shu Y."/>
            <person name="Skala J."/>
            <person name="Slonimski P.P."/>
            <person name="Sor F."/>
            <person name="Soustelle C."/>
            <person name="Spiegelberg R."/>
            <person name="Stateva L.I."/>
            <person name="Steensma H.Y."/>
            <person name="Steiner S."/>
            <person name="Thierry A."/>
            <person name="Thireos G."/>
            <person name="Tzermia M."/>
            <person name="Urrestarazu L.A."/>
            <person name="Valle G."/>
            <person name="Vetter I."/>
            <person name="van Vliet-Reedijk J.C."/>
            <person name="Voet M."/>
            <person name="Volckaert G."/>
            <person name="Vreken P."/>
            <person name="Wang H."/>
            <person name="Warmington J.R."/>
            <person name="von Wettstein D."/>
            <person name="Wicksteed B.L."/>
            <person name="Wilson C."/>
            <person name="Wurst H."/>
            <person name="Xu G."/>
            <person name="Yoshikawa A."/>
            <person name="Zimmermann F.K."/>
            <person name="Sgouros J.G."/>
        </authorList>
    </citation>
    <scope>NUCLEOTIDE SEQUENCE [LARGE SCALE GENOMIC DNA]</scope>
    <source>
        <strain>ATCC 204508 / S288c</strain>
    </source>
</reference>
<reference key="5">
    <citation type="submission" date="1996-01" db="EMBL/GenBank/DDBJ databases">
        <authorList>
            <person name="Gromadka R."/>
        </authorList>
    </citation>
    <scope>SEQUENCE REVISION</scope>
</reference>
<reference key="6">
    <citation type="journal article" date="2014" name="G3 (Bethesda)">
        <title>The reference genome sequence of Saccharomyces cerevisiae: Then and now.</title>
        <authorList>
            <person name="Engel S.R."/>
            <person name="Dietrich F.S."/>
            <person name="Fisk D.G."/>
            <person name="Binkley G."/>
            <person name="Balakrishnan R."/>
            <person name="Costanzo M.C."/>
            <person name="Dwight S.S."/>
            <person name="Hitz B.C."/>
            <person name="Karra K."/>
            <person name="Nash R.S."/>
            <person name="Weng S."/>
            <person name="Wong E.D."/>
            <person name="Lloyd P."/>
            <person name="Skrzypek M.S."/>
            <person name="Miyasato S.R."/>
            <person name="Simison M."/>
            <person name="Cherry J.M."/>
        </authorList>
    </citation>
    <scope>GENOME REANNOTATION</scope>
    <source>
        <strain>ATCC 204508 / S288c</strain>
    </source>
</reference>
<reference key="7">
    <citation type="journal article" date="1984" name="Nucleic Acids Res.">
        <title>Expression of Ty-lacZ fusions in Saccharomyces cerevisiae.</title>
        <authorList>
            <person name="Bowen B.A."/>
            <person name="Fulton A.M."/>
            <person name="Tuite M.F."/>
            <person name="Kingsman S.M."/>
            <person name="Kingsman A.J."/>
        </authorList>
    </citation>
    <scope>NUCLEOTIDE SEQUENCE [GENOMIC DNA] OF 1-63</scope>
</reference>
<reference key="8">
    <citation type="journal article" date="1998" name="Genome Res.">
        <title>Transposable elements and genome organization: a comprehensive survey of retrotransposons revealed by the complete Saccharomyces cerevisiae genome sequence.</title>
        <authorList>
            <person name="Kim J.M."/>
            <person name="Vanguri S."/>
            <person name="Boeke J.D."/>
            <person name="Gabriel A."/>
            <person name="Voytas D.F."/>
        </authorList>
    </citation>
    <scope>NOMENCLATURE</scope>
</reference>
<reference key="9">
    <citation type="journal article" date="2005" name="Cytogenet. Genome Res.">
        <title>Happy together: the life and times of Ty retrotransposons and their hosts.</title>
        <authorList>
            <person name="Lesage P."/>
            <person name="Todeschini A.L."/>
        </authorList>
    </citation>
    <scope>REVIEW</scope>
</reference>
<keyword id="KW-0963">Cytoplasm</keyword>
<keyword id="KW-1185">Reference proteome</keyword>
<keyword id="KW-0688">Ribosomal frameshifting</keyword>
<keyword id="KW-0814">Transposable element</keyword>